<evidence type="ECO:0000250" key="1"/>
<evidence type="ECO:0000255" key="2"/>
<evidence type="ECO:0000305" key="3"/>
<reference key="1">
    <citation type="journal article" date="2001" name="Lancet">
        <title>Whole genome sequencing of meticillin-resistant Staphylococcus aureus.</title>
        <authorList>
            <person name="Kuroda M."/>
            <person name="Ohta T."/>
            <person name="Uchiyama I."/>
            <person name="Baba T."/>
            <person name="Yuzawa H."/>
            <person name="Kobayashi I."/>
            <person name="Cui L."/>
            <person name="Oguchi A."/>
            <person name="Aoki K."/>
            <person name="Nagai Y."/>
            <person name="Lian J.-Q."/>
            <person name="Ito T."/>
            <person name="Kanamori M."/>
            <person name="Matsumaru H."/>
            <person name="Maruyama A."/>
            <person name="Murakami H."/>
            <person name="Hosoyama A."/>
            <person name="Mizutani-Ui Y."/>
            <person name="Takahashi N.K."/>
            <person name="Sawano T."/>
            <person name="Inoue R."/>
            <person name="Kaito C."/>
            <person name="Sekimizu K."/>
            <person name="Hirakawa H."/>
            <person name="Kuhara S."/>
            <person name="Goto S."/>
            <person name="Yabuzaki J."/>
            <person name="Kanehisa M."/>
            <person name="Yamashita A."/>
            <person name="Oshima K."/>
            <person name="Furuya K."/>
            <person name="Yoshino C."/>
            <person name="Shiba T."/>
            <person name="Hattori M."/>
            <person name="Ogasawara N."/>
            <person name="Hayashi H."/>
            <person name="Hiramatsu K."/>
        </authorList>
    </citation>
    <scope>NUCLEOTIDE SEQUENCE [LARGE SCALE GENOMIC DNA]</scope>
    <source>
        <strain>N315</strain>
    </source>
</reference>
<sequence length="116" mass="13986">MSNKVQRFIEAERELSQLKHWLKTTHKISIEEFVVLFKVYEAEKISGKELRDTLHFEMLWDTSKIDVIIRKIYKKELISKLRSETDERQVFYFYSTSQKKLLDKITKEIEVLSVTN</sequence>
<protein>
    <recommendedName>
        <fullName>HTH-type transcriptional regulator SarV</fullName>
    </recommendedName>
    <alternativeName>
        <fullName>Staphylococcal accessory regulator V</fullName>
    </alternativeName>
</protein>
<keyword id="KW-0010">Activator</keyword>
<keyword id="KW-0963">Cytoplasm</keyword>
<keyword id="KW-0238">DNA-binding</keyword>
<keyword id="KW-0804">Transcription</keyword>
<keyword id="KW-0805">Transcription regulation</keyword>
<keyword id="KW-0843">Virulence</keyword>
<proteinExistence type="inferred from homology"/>
<name>SARV_STAAN</name>
<organism>
    <name type="scientific">Staphylococcus aureus (strain N315)</name>
    <dbReference type="NCBI Taxonomy" id="158879"/>
    <lineage>
        <taxon>Bacteria</taxon>
        <taxon>Bacillati</taxon>
        <taxon>Bacillota</taxon>
        <taxon>Bacilli</taxon>
        <taxon>Bacillales</taxon>
        <taxon>Staphylococcaceae</taxon>
        <taxon>Staphylococcus</taxon>
    </lineage>
</organism>
<dbReference type="EMBL" id="BA000018">
    <property type="protein sequence ID" value="BAB43359.1"/>
    <property type="molecule type" value="Genomic_DNA"/>
</dbReference>
<dbReference type="PIR" id="F90024">
    <property type="entry name" value="F90024"/>
</dbReference>
<dbReference type="RefSeq" id="WP_000066900.1">
    <property type="nucleotide sequence ID" value="NC_002745.2"/>
</dbReference>
<dbReference type="SMR" id="Q7A442"/>
<dbReference type="EnsemblBacteria" id="BAB43359">
    <property type="protein sequence ID" value="BAB43359"/>
    <property type="gene ID" value="BAB43359"/>
</dbReference>
<dbReference type="KEGG" id="sau:SA2062"/>
<dbReference type="HOGENOM" id="CLU_2095367_0_0_9"/>
<dbReference type="GO" id="GO:0005737">
    <property type="term" value="C:cytoplasm"/>
    <property type="evidence" value="ECO:0007669"/>
    <property type="project" value="UniProtKB-SubCell"/>
</dbReference>
<dbReference type="GO" id="GO:0003677">
    <property type="term" value="F:DNA binding"/>
    <property type="evidence" value="ECO:0007669"/>
    <property type="project" value="UniProtKB-KW"/>
</dbReference>
<dbReference type="GO" id="GO:0006355">
    <property type="term" value="P:regulation of DNA-templated transcription"/>
    <property type="evidence" value="ECO:0007669"/>
    <property type="project" value="InterPro"/>
</dbReference>
<dbReference type="Gene3D" id="1.10.10.10">
    <property type="entry name" value="Winged helix-like DNA-binding domain superfamily/Winged helix DNA-binding domain"/>
    <property type="match status" value="1"/>
</dbReference>
<dbReference type="InterPro" id="IPR010166">
    <property type="entry name" value="SarA/Rot_dom"/>
</dbReference>
<dbReference type="InterPro" id="IPR055166">
    <property type="entry name" value="Transc_reg_Sar_Rot_HTH"/>
</dbReference>
<dbReference type="InterPro" id="IPR036388">
    <property type="entry name" value="WH-like_DNA-bd_sf"/>
</dbReference>
<dbReference type="InterPro" id="IPR036390">
    <property type="entry name" value="WH_DNA-bd_sf"/>
</dbReference>
<dbReference type="NCBIfam" id="TIGR01889">
    <property type="entry name" value="Staph_reg_Sar"/>
    <property type="match status" value="1"/>
</dbReference>
<dbReference type="Pfam" id="PF22381">
    <property type="entry name" value="Staph_reg_Sar_Rot"/>
    <property type="match status" value="1"/>
</dbReference>
<dbReference type="SUPFAM" id="SSF46785">
    <property type="entry name" value="Winged helix' DNA-binding domain"/>
    <property type="match status" value="1"/>
</dbReference>
<feature type="chain" id="PRO_0000219608" description="HTH-type transcriptional regulator SarV">
    <location>
        <begin position="1"/>
        <end position="116"/>
    </location>
</feature>
<feature type="DNA-binding region" description="H-T-H motif" evidence="2">
    <location>
        <begin position="51"/>
        <end position="74"/>
    </location>
</feature>
<accession>Q7A442</accession>
<gene>
    <name type="primary">sarV</name>
    <name type="ordered locus">SA2062</name>
</gene>
<comment type="function">
    <text evidence="1">Part of the pathway by which MgrA and SarA control autolysis.</text>
</comment>
<comment type="subcellular location">
    <subcellularLocation>
        <location evidence="1">Cytoplasm</location>
    </subcellularLocation>
</comment>
<comment type="similarity">
    <text evidence="3">Belongs to the SarA family.</text>
</comment>